<gene>
    <name type="primary">GRF10</name>
    <name type="ordered locus">At1g22300</name>
    <name type="ORF">T16E15.8</name>
</gene>
<reference key="1">
    <citation type="journal article" date="1997" name="Plant Physiol.">
        <title>The Arabidopsis 14-3-3 multigene family.</title>
        <authorList>
            <person name="Wu K."/>
            <person name="Rooney M.F."/>
            <person name="Ferl R.J."/>
        </authorList>
    </citation>
    <scope>NUCLEOTIDE SEQUENCE [MRNA] (ISOFORM 1)</scope>
    <source>
        <strain>cv. Columbia</strain>
    </source>
</reference>
<reference key="2">
    <citation type="online journal article" date="1999" name="Plant Gene Register">
        <title>Sequences of five Arabidopsis general regulatory factor (GRF) genes encoding 14-3-3 proteins.</title>
        <authorList>
            <person name="Chung H.-J."/>
            <person name="Shanker S."/>
            <person name="Ferl R.J."/>
        </authorList>
        <locator>PGR99-114</locator>
    </citation>
    <scope>NUCLEOTIDE SEQUENCE [GENOMIC DNA]</scope>
    <source>
        <strain>cv. Columbia</strain>
    </source>
</reference>
<reference key="3">
    <citation type="journal article" date="2000" name="Nature">
        <title>Sequence and analysis of chromosome 1 of the plant Arabidopsis thaliana.</title>
        <authorList>
            <person name="Theologis A."/>
            <person name="Ecker J.R."/>
            <person name="Palm C.J."/>
            <person name="Federspiel N.A."/>
            <person name="Kaul S."/>
            <person name="White O."/>
            <person name="Alonso J."/>
            <person name="Altafi H."/>
            <person name="Araujo R."/>
            <person name="Bowman C.L."/>
            <person name="Brooks S.Y."/>
            <person name="Buehler E."/>
            <person name="Chan A."/>
            <person name="Chao Q."/>
            <person name="Chen H."/>
            <person name="Cheuk R.F."/>
            <person name="Chin C.W."/>
            <person name="Chung M.K."/>
            <person name="Conn L."/>
            <person name="Conway A.B."/>
            <person name="Conway A.R."/>
            <person name="Creasy T.H."/>
            <person name="Dewar K."/>
            <person name="Dunn P."/>
            <person name="Etgu P."/>
            <person name="Feldblyum T.V."/>
            <person name="Feng J.-D."/>
            <person name="Fong B."/>
            <person name="Fujii C.Y."/>
            <person name="Gill J.E."/>
            <person name="Goldsmith A.D."/>
            <person name="Haas B."/>
            <person name="Hansen N.F."/>
            <person name="Hughes B."/>
            <person name="Huizar L."/>
            <person name="Hunter J.L."/>
            <person name="Jenkins J."/>
            <person name="Johnson-Hopson C."/>
            <person name="Khan S."/>
            <person name="Khaykin E."/>
            <person name="Kim C.J."/>
            <person name="Koo H.L."/>
            <person name="Kremenetskaia I."/>
            <person name="Kurtz D.B."/>
            <person name="Kwan A."/>
            <person name="Lam B."/>
            <person name="Langin-Hooper S."/>
            <person name="Lee A."/>
            <person name="Lee J.M."/>
            <person name="Lenz C.A."/>
            <person name="Li J.H."/>
            <person name="Li Y.-P."/>
            <person name="Lin X."/>
            <person name="Liu S.X."/>
            <person name="Liu Z.A."/>
            <person name="Luros J.S."/>
            <person name="Maiti R."/>
            <person name="Marziali A."/>
            <person name="Militscher J."/>
            <person name="Miranda M."/>
            <person name="Nguyen M."/>
            <person name="Nierman W.C."/>
            <person name="Osborne B.I."/>
            <person name="Pai G."/>
            <person name="Peterson J."/>
            <person name="Pham P.K."/>
            <person name="Rizzo M."/>
            <person name="Rooney T."/>
            <person name="Rowley D."/>
            <person name="Sakano H."/>
            <person name="Salzberg S.L."/>
            <person name="Schwartz J.R."/>
            <person name="Shinn P."/>
            <person name="Southwick A.M."/>
            <person name="Sun H."/>
            <person name="Tallon L.J."/>
            <person name="Tambunga G."/>
            <person name="Toriumi M.J."/>
            <person name="Town C.D."/>
            <person name="Utterback T."/>
            <person name="Van Aken S."/>
            <person name="Vaysberg M."/>
            <person name="Vysotskaia V.S."/>
            <person name="Walker M."/>
            <person name="Wu D."/>
            <person name="Yu G."/>
            <person name="Fraser C.M."/>
            <person name="Venter J.C."/>
            <person name="Davis R.W."/>
        </authorList>
    </citation>
    <scope>NUCLEOTIDE SEQUENCE [LARGE SCALE GENOMIC DNA]</scope>
    <source>
        <strain>cv. Columbia</strain>
    </source>
</reference>
<reference key="4">
    <citation type="journal article" date="2017" name="Plant J.">
        <title>Araport11: a complete reannotation of the Arabidopsis thaliana reference genome.</title>
        <authorList>
            <person name="Cheng C.Y."/>
            <person name="Krishnakumar V."/>
            <person name="Chan A.P."/>
            <person name="Thibaud-Nissen F."/>
            <person name="Schobel S."/>
            <person name="Town C.D."/>
        </authorList>
    </citation>
    <scope>GENOME REANNOTATION</scope>
    <source>
        <strain>cv. Columbia</strain>
    </source>
</reference>
<reference key="5">
    <citation type="journal article" date="2003" name="Science">
        <title>Empirical analysis of transcriptional activity in the Arabidopsis genome.</title>
        <authorList>
            <person name="Yamada K."/>
            <person name="Lim J."/>
            <person name="Dale J.M."/>
            <person name="Chen H."/>
            <person name="Shinn P."/>
            <person name="Palm C.J."/>
            <person name="Southwick A.M."/>
            <person name="Wu H.C."/>
            <person name="Kim C.J."/>
            <person name="Nguyen M."/>
            <person name="Pham P.K."/>
            <person name="Cheuk R.F."/>
            <person name="Karlin-Newmann G."/>
            <person name="Liu S.X."/>
            <person name="Lam B."/>
            <person name="Sakano H."/>
            <person name="Wu T."/>
            <person name="Yu G."/>
            <person name="Miranda M."/>
            <person name="Quach H.L."/>
            <person name="Tripp M."/>
            <person name="Chang C.H."/>
            <person name="Lee J.M."/>
            <person name="Toriumi M.J."/>
            <person name="Chan M.M."/>
            <person name="Tang C.C."/>
            <person name="Onodera C.S."/>
            <person name="Deng J.M."/>
            <person name="Akiyama K."/>
            <person name="Ansari Y."/>
            <person name="Arakawa T."/>
            <person name="Banh J."/>
            <person name="Banno F."/>
            <person name="Bowser L."/>
            <person name="Brooks S.Y."/>
            <person name="Carninci P."/>
            <person name="Chao Q."/>
            <person name="Choy N."/>
            <person name="Enju A."/>
            <person name="Goldsmith A.D."/>
            <person name="Gurjal M."/>
            <person name="Hansen N.F."/>
            <person name="Hayashizaki Y."/>
            <person name="Johnson-Hopson C."/>
            <person name="Hsuan V.W."/>
            <person name="Iida K."/>
            <person name="Karnes M."/>
            <person name="Khan S."/>
            <person name="Koesema E."/>
            <person name="Ishida J."/>
            <person name="Jiang P.X."/>
            <person name="Jones T."/>
            <person name="Kawai J."/>
            <person name="Kamiya A."/>
            <person name="Meyers C."/>
            <person name="Nakajima M."/>
            <person name="Narusaka M."/>
            <person name="Seki M."/>
            <person name="Sakurai T."/>
            <person name="Satou M."/>
            <person name="Tamse R."/>
            <person name="Vaysberg M."/>
            <person name="Wallender E.K."/>
            <person name="Wong C."/>
            <person name="Yamamura Y."/>
            <person name="Yuan S."/>
            <person name="Shinozaki K."/>
            <person name="Davis R.W."/>
            <person name="Theologis A."/>
            <person name="Ecker J.R."/>
        </authorList>
    </citation>
    <scope>NUCLEOTIDE SEQUENCE [LARGE SCALE MRNA] (ISOFORMS 1 AND 2)</scope>
    <source>
        <strain>cv. Columbia</strain>
    </source>
</reference>
<reference key="6">
    <citation type="submission" date="2002-03" db="EMBL/GenBank/DDBJ databases">
        <title>Full-length cDNA from Arabidopsis thaliana.</title>
        <authorList>
            <person name="Brover V.V."/>
            <person name="Troukhan M.E."/>
            <person name="Alexandrov N.A."/>
            <person name="Lu Y.-P."/>
            <person name="Flavell R.B."/>
            <person name="Feldmann K.A."/>
        </authorList>
    </citation>
    <scope>NUCLEOTIDE SEQUENCE [LARGE SCALE MRNA] (ISOFORM 1)</scope>
</reference>
<reference key="7">
    <citation type="journal article" date="2014" name="Plant J.">
        <title>Light modulated activity of root alkaline/neutral invertase involves the interaction with 14-3-3 proteins.</title>
        <authorList>
            <person name="Gao J."/>
            <person name="van Kleeff P.J."/>
            <person name="Oecking C."/>
            <person name="Li K.W."/>
            <person name="Erban A."/>
            <person name="Kopka J."/>
            <person name="Hincha D.K."/>
            <person name="de Boer A.H."/>
        </authorList>
    </citation>
    <scope>INTERACTION WITH CINV1</scope>
</reference>
<reference key="8">
    <citation type="journal article" date="2017" name="Mol. Cell">
        <title>Plasma membrane CRPK1-mediated phosphorylation of 14-3-3 proteins induces their nuclear import to fine-tune CBF signaling during cold response.</title>
        <authorList>
            <person name="Liu Z."/>
            <person name="Jia Y."/>
            <person name="Ding Y."/>
            <person name="Shi Y."/>
            <person name="Li Z."/>
            <person name="Guo Y."/>
            <person name="Gong Z."/>
            <person name="Yang S."/>
        </authorList>
    </citation>
    <scope>INTERACTION WITH DREB1A AND DREB1B</scope>
    <source>
        <strain>cv. Columbia</strain>
    </source>
</reference>
<comment type="function">
    <text>Is associated with a DNA binding complex that binds to the G box, a well-characterized cis-acting DNA regulatory element found in plant genes.</text>
</comment>
<comment type="subunit">
    <text evidence="2 3">Interacts with DREB1A and DREB1B in the nucleus (PubMed:28344081). Interacts with CINV1 (PubMed:25256212).</text>
</comment>
<comment type="interaction">
    <interactant intactId="EBI-1803304">
        <id>P48347</id>
    </interactant>
    <interactant intactId="EBI-638506">
        <id>Q41009</id>
        <label>TOC34</label>
    </interactant>
    <organismsDiffer>true</organismsDiffer>
    <experiments>2</experiments>
</comment>
<comment type="subcellular location">
    <subcellularLocation>
        <location evidence="1">Nucleus</location>
    </subcellularLocation>
    <subcellularLocation>
        <location evidence="1">Cytoplasm</location>
    </subcellularLocation>
    <text evidence="1">Translocates from the cytosol to the nucleus when phosphorylated.</text>
</comment>
<comment type="alternative products">
    <event type="alternative splicing"/>
    <isoform>
        <id>P48347-1</id>
        <name>1</name>
        <sequence type="displayed"/>
    </isoform>
    <isoform>
        <id>P48347-2</id>
        <name>2</name>
        <sequence type="described" ref="VSP_008972"/>
    </isoform>
</comment>
<comment type="similarity">
    <text evidence="5">Belongs to the 14-3-3 family.</text>
</comment>
<dbReference type="EMBL" id="U36446">
    <property type="protein sequence ID" value="AAA79699.1"/>
    <property type="molecule type" value="mRNA"/>
</dbReference>
<dbReference type="EMBL" id="AF145302">
    <property type="protein sequence ID" value="AAD51785.1"/>
    <property type="molecule type" value="Genomic_DNA"/>
</dbReference>
<dbReference type="EMBL" id="AC068562">
    <property type="protein sequence ID" value="AAF87261.1"/>
    <property type="molecule type" value="Genomic_DNA"/>
</dbReference>
<dbReference type="EMBL" id="CP002684">
    <property type="protein sequence ID" value="AEE30225.1"/>
    <property type="molecule type" value="Genomic_DNA"/>
</dbReference>
<dbReference type="EMBL" id="CP002684">
    <property type="protein sequence ID" value="AEE30226.1"/>
    <property type="molecule type" value="Genomic_DNA"/>
</dbReference>
<dbReference type="EMBL" id="AF334382">
    <property type="protein sequence ID" value="AAG50088.1"/>
    <property type="molecule type" value="mRNA"/>
</dbReference>
<dbReference type="EMBL" id="AY054505">
    <property type="protein sequence ID" value="AAK96696.1"/>
    <property type="molecule type" value="mRNA"/>
</dbReference>
<dbReference type="EMBL" id="AY058834">
    <property type="protein sequence ID" value="AAL24222.1"/>
    <property type="molecule type" value="mRNA"/>
</dbReference>
<dbReference type="EMBL" id="AY062838">
    <property type="protein sequence ID" value="AAL32916.1"/>
    <property type="molecule type" value="mRNA"/>
</dbReference>
<dbReference type="EMBL" id="AY081674">
    <property type="protein sequence ID" value="AAM10236.1"/>
    <property type="molecule type" value="mRNA"/>
</dbReference>
<dbReference type="EMBL" id="AY087580">
    <property type="protein sequence ID" value="AAM65122.1"/>
    <property type="molecule type" value="mRNA"/>
</dbReference>
<dbReference type="PIR" id="H86355">
    <property type="entry name" value="H86355"/>
</dbReference>
<dbReference type="RefSeq" id="NP_564167.1">
    <molecule id="P48347-1"/>
    <property type="nucleotide sequence ID" value="NM_102081.4"/>
</dbReference>
<dbReference type="RefSeq" id="NP_849698.1">
    <molecule id="P48347-2"/>
    <property type="nucleotide sequence ID" value="NM_179367.2"/>
</dbReference>
<dbReference type="SMR" id="P48347"/>
<dbReference type="BioGRID" id="24076">
    <property type="interactions" value="88"/>
</dbReference>
<dbReference type="FunCoup" id="P48347">
    <property type="interactions" value="1802"/>
</dbReference>
<dbReference type="IntAct" id="P48347">
    <property type="interactions" value="4"/>
</dbReference>
<dbReference type="MINT" id="P48347"/>
<dbReference type="STRING" id="3702.P48347"/>
<dbReference type="iPTMnet" id="P48347"/>
<dbReference type="PaxDb" id="3702-AT1G22300.1"/>
<dbReference type="ProteomicsDB" id="244542">
    <molecule id="P48347-1"/>
</dbReference>
<dbReference type="EnsemblPlants" id="AT1G22300.1">
    <molecule id="P48347-1"/>
    <property type="protein sequence ID" value="AT1G22300.1"/>
    <property type="gene ID" value="AT1G22300"/>
</dbReference>
<dbReference type="EnsemblPlants" id="AT1G22300.2">
    <molecule id="P48347-2"/>
    <property type="protein sequence ID" value="AT1G22300.2"/>
    <property type="gene ID" value="AT1G22300"/>
</dbReference>
<dbReference type="GeneID" id="838837"/>
<dbReference type="Gramene" id="AT1G22300.1">
    <molecule id="P48347-1"/>
    <property type="protein sequence ID" value="AT1G22300.1"/>
    <property type="gene ID" value="AT1G22300"/>
</dbReference>
<dbReference type="Gramene" id="AT1G22300.2">
    <molecule id="P48347-2"/>
    <property type="protein sequence ID" value="AT1G22300.2"/>
    <property type="gene ID" value="AT1G22300"/>
</dbReference>
<dbReference type="KEGG" id="ath:AT1G22300"/>
<dbReference type="Araport" id="AT1G22300"/>
<dbReference type="TAIR" id="AT1G22300">
    <property type="gene designation" value="GRF10"/>
</dbReference>
<dbReference type="eggNOG" id="KOG0841">
    <property type="taxonomic scope" value="Eukaryota"/>
</dbReference>
<dbReference type="InParanoid" id="P48347"/>
<dbReference type="OMA" id="ERACHMA"/>
<dbReference type="OrthoDB" id="10260625at2759"/>
<dbReference type="PhylomeDB" id="P48347"/>
<dbReference type="CD-CODE" id="4299E36E">
    <property type="entry name" value="Nucleolus"/>
</dbReference>
<dbReference type="PRO" id="PR:P48347"/>
<dbReference type="Proteomes" id="UP000006548">
    <property type="component" value="Chromosome 1"/>
</dbReference>
<dbReference type="ExpressionAtlas" id="P48347">
    <property type="expression patterns" value="baseline and differential"/>
</dbReference>
<dbReference type="GO" id="GO:0005829">
    <property type="term" value="C:cytosol"/>
    <property type="evidence" value="ECO:0007005"/>
    <property type="project" value="TAIR"/>
</dbReference>
<dbReference type="GO" id="GO:0005739">
    <property type="term" value="C:mitochondrion"/>
    <property type="evidence" value="ECO:0007005"/>
    <property type="project" value="TAIR"/>
</dbReference>
<dbReference type="GO" id="GO:0005634">
    <property type="term" value="C:nucleus"/>
    <property type="evidence" value="ECO:0007005"/>
    <property type="project" value="TAIR"/>
</dbReference>
<dbReference type="GO" id="GO:0009506">
    <property type="term" value="C:plasmodesma"/>
    <property type="evidence" value="ECO:0007005"/>
    <property type="project" value="TAIR"/>
</dbReference>
<dbReference type="GO" id="GO:0005524">
    <property type="term" value="F:ATP binding"/>
    <property type="evidence" value="ECO:0007005"/>
    <property type="project" value="TAIR"/>
</dbReference>
<dbReference type="GO" id="GO:0009742">
    <property type="term" value="P:brassinosteroid mediated signaling pathway"/>
    <property type="evidence" value="ECO:0000353"/>
    <property type="project" value="TAIR"/>
</dbReference>
<dbReference type="FunFam" id="1.20.190.20:FF:000002">
    <property type="entry name" value="14-3-3 protein epsilon"/>
    <property type="match status" value="1"/>
</dbReference>
<dbReference type="Gene3D" id="1.20.190.20">
    <property type="entry name" value="14-3-3 domain"/>
    <property type="match status" value="1"/>
</dbReference>
<dbReference type="InterPro" id="IPR000308">
    <property type="entry name" value="14-3-3"/>
</dbReference>
<dbReference type="InterPro" id="IPR023409">
    <property type="entry name" value="14-3-3_CS"/>
</dbReference>
<dbReference type="InterPro" id="IPR036815">
    <property type="entry name" value="14-3-3_dom_sf"/>
</dbReference>
<dbReference type="InterPro" id="IPR023410">
    <property type="entry name" value="14-3-3_domain"/>
</dbReference>
<dbReference type="PANTHER" id="PTHR18860">
    <property type="entry name" value="14-3-3 PROTEIN"/>
    <property type="match status" value="1"/>
</dbReference>
<dbReference type="Pfam" id="PF00244">
    <property type="entry name" value="14-3-3"/>
    <property type="match status" value="1"/>
</dbReference>
<dbReference type="PIRSF" id="PIRSF000868">
    <property type="entry name" value="14-3-3"/>
    <property type="match status" value="1"/>
</dbReference>
<dbReference type="PRINTS" id="PR00305">
    <property type="entry name" value="1433ZETA"/>
</dbReference>
<dbReference type="SMART" id="SM00101">
    <property type="entry name" value="14_3_3"/>
    <property type="match status" value="1"/>
</dbReference>
<dbReference type="SUPFAM" id="SSF48445">
    <property type="entry name" value="14-3-3 protein"/>
    <property type="match status" value="1"/>
</dbReference>
<dbReference type="PROSITE" id="PS00796">
    <property type="entry name" value="1433_1"/>
    <property type="match status" value="1"/>
</dbReference>
<dbReference type="PROSITE" id="PS00797">
    <property type="entry name" value="1433_2"/>
    <property type="match status" value="1"/>
</dbReference>
<keyword id="KW-0025">Alternative splicing</keyword>
<keyword id="KW-0963">Cytoplasm</keyword>
<keyword id="KW-0539">Nucleus</keyword>
<keyword id="KW-0597">Phosphoprotein</keyword>
<keyword id="KW-1185">Reference proteome</keyword>
<feature type="chain" id="PRO_0000058672" description="14-3-3-like protein GF14 epsilon">
    <location>
        <begin position="1"/>
        <end position="254"/>
    </location>
</feature>
<feature type="modified residue" description="Phosphoserine" evidence="1">
    <location>
        <position position="65"/>
    </location>
</feature>
<feature type="modified residue" description="Phosphoserine" evidence="1">
    <location>
        <position position="188"/>
    </location>
</feature>
<feature type="splice variant" id="VSP_008972" description="In isoform 2." evidence="4">
    <original>N</original>
    <variation>V</variation>
    <location>
        <position position="254"/>
    </location>
</feature>
<proteinExistence type="evidence at protein level"/>
<sequence length="254" mass="28915">MENEREKQVYLAKLSEQTERYDEMVEAMKKVAQLDVELTVEERNLVSVGYKNVIGARRASWRILSSIEQKEESKGNDENVKRLKNYRKRVEDELAKVCNDILSVIDKHLIPSSNAVESTVFFYKMKGDYYRYLAEFSSGAERKEAADQSLEAYKAAVAAAENGLAPTHPVRLGLALNFSVFYYEILNSPESACQLAKQAFDDAIAELDSLNEESYKDSTLIMQLLRDNLTLWTSDLNEEGDERTKGADEPQDEN</sequence>
<evidence type="ECO:0000250" key="1">
    <source>
        <dbReference type="UniProtKB" id="P48349"/>
    </source>
</evidence>
<evidence type="ECO:0000269" key="2">
    <source>
    </source>
</evidence>
<evidence type="ECO:0000269" key="3">
    <source>
    </source>
</evidence>
<evidence type="ECO:0000303" key="4">
    <source>
    </source>
</evidence>
<evidence type="ECO:0000305" key="5"/>
<accession>P48347</accession>
<accession>Q9LME5</accession>
<protein>
    <recommendedName>
        <fullName>14-3-3-like protein GF14 epsilon</fullName>
    </recommendedName>
    <alternativeName>
        <fullName>General regulatory factor 10</fullName>
    </alternativeName>
</protein>
<name>14310_ARATH</name>
<organism>
    <name type="scientific">Arabidopsis thaliana</name>
    <name type="common">Mouse-ear cress</name>
    <dbReference type="NCBI Taxonomy" id="3702"/>
    <lineage>
        <taxon>Eukaryota</taxon>
        <taxon>Viridiplantae</taxon>
        <taxon>Streptophyta</taxon>
        <taxon>Embryophyta</taxon>
        <taxon>Tracheophyta</taxon>
        <taxon>Spermatophyta</taxon>
        <taxon>Magnoliopsida</taxon>
        <taxon>eudicotyledons</taxon>
        <taxon>Gunneridae</taxon>
        <taxon>Pentapetalae</taxon>
        <taxon>rosids</taxon>
        <taxon>malvids</taxon>
        <taxon>Brassicales</taxon>
        <taxon>Brassicaceae</taxon>
        <taxon>Camelineae</taxon>
        <taxon>Arabidopsis</taxon>
    </lineage>
</organism>